<proteinExistence type="evidence at transcript level"/>
<organism>
    <name type="scientific">Rattus norvegicus</name>
    <name type="common">Rat</name>
    <dbReference type="NCBI Taxonomy" id="10116"/>
    <lineage>
        <taxon>Eukaryota</taxon>
        <taxon>Metazoa</taxon>
        <taxon>Chordata</taxon>
        <taxon>Craniata</taxon>
        <taxon>Vertebrata</taxon>
        <taxon>Euteleostomi</taxon>
        <taxon>Mammalia</taxon>
        <taxon>Eutheria</taxon>
        <taxon>Euarchontoglires</taxon>
        <taxon>Glires</taxon>
        <taxon>Rodentia</taxon>
        <taxon>Myomorpha</taxon>
        <taxon>Muroidea</taxon>
        <taxon>Muridae</taxon>
        <taxon>Murinae</taxon>
        <taxon>Rattus</taxon>
    </lineage>
</organism>
<comment type="function">
    <text evidence="1">Inhibits programmed -1 ribosomal frameshifting (-1PRF) of a variety of mRNAs from viruses and cellular genes. Interacts with the -1PRF signal of target mRNA and translating ribosomes and causes premature translation termination at the frameshifting site. May exhibit antiviral activity.</text>
</comment>
<comment type="subunit">
    <text evidence="1">Interacts with PABPC1. Found in a complex with PABPC1 and LARP1. Interacts with ELAV1, MOV10 and UPF1; the interactions increase in presence of RNA. Binds to ribosomes. Interacts with GSPT1.</text>
</comment>
<comment type="subcellular location">
    <subcellularLocation>
        <location evidence="1">Cytoplasm</location>
    </subcellularLocation>
    <subcellularLocation>
        <location evidence="1">Nucleus</location>
    </subcellularLocation>
    <subcellularLocation>
        <location evidence="1">Cytoplasm</location>
        <location evidence="1">P-body</location>
    </subcellularLocation>
    <text evidence="1">Predominantly found in t for dsDNA.</text>
</comment>
<comment type="similarity">
    <text evidence="3">Belongs to the SHFL family.</text>
</comment>
<evidence type="ECO:0000250" key="1">
    <source>
        <dbReference type="UniProtKB" id="Q9NUL5"/>
    </source>
</evidence>
<evidence type="ECO:0000256" key="2">
    <source>
        <dbReference type="SAM" id="MobiDB-lite"/>
    </source>
</evidence>
<evidence type="ECO:0000305" key="3"/>
<gene>
    <name type="primary">Shfl</name>
    <name evidence="1" type="synonym">Ryden</name>
</gene>
<accession>Q5RJN4</accession>
<reference key="1">
    <citation type="journal article" date="2004" name="Genome Res.">
        <title>The status, quality, and expansion of the NIH full-length cDNA project: the Mammalian Gene Collection (MGC).</title>
        <authorList>
            <consortium name="The MGC Project Team"/>
        </authorList>
    </citation>
    <scope>NUCLEOTIDE SEQUENCE [LARGE SCALE MRNA]</scope>
    <source>
        <tissue>Ovary</tissue>
    </source>
</reference>
<name>SHFL_RAT</name>
<sequence length="163" mass="18865">MAQDGVELEKSVRRLREKFHGKVSPKKAGALMRKFGSDHTGVGRSIVYGVKQKDGQELSNDLDAQDPPEDMKQDQDIQAVATSLLPLTQANLRMFQRAQDDLIPAVDRQFACSSCDHVWWRRVPQRKEVSRCRKCRKRYEPVPNDKMWGLAEFHCPKCRHNFR</sequence>
<dbReference type="EMBL" id="BC086569">
    <property type="protein sequence ID" value="AAH86569.1"/>
    <property type="molecule type" value="mRNA"/>
</dbReference>
<dbReference type="RefSeq" id="NP_001020225.1">
    <property type="nucleotide sequence ID" value="NM_001025054.1"/>
</dbReference>
<dbReference type="SMR" id="Q5RJN4"/>
<dbReference type="FunCoup" id="Q5RJN4">
    <property type="interactions" value="281"/>
</dbReference>
<dbReference type="STRING" id="10116.ENSRNOP00000027949"/>
<dbReference type="PhosphoSitePlus" id="Q5RJN4"/>
<dbReference type="jPOST" id="Q5RJN4"/>
<dbReference type="PaxDb" id="10116-ENSRNOP00000027949"/>
<dbReference type="UCSC" id="RGD:1565995">
    <property type="organism name" value="rat"/>
</dbReference>
<dbReference type="AGR" id="RGD:1565995"/>
<dbReference type="RGD" id="1565995">
    <property type="gene designation" value="Shfl"/>
</dbReference>
<dbReference type="eggNOG" id="ENOG502QVND">
    <property type="taxonomic scope" value="Eukaryota"/>
</dbReference>
<dbReference type="HOGENOM" id="CLU_087318_0_0_1"/>
<dbReference type="InParanoid" id="Q5RJN4"/>
<dbReference type="PhylomeDB" id="Q5RJN4"/>
<dbReference type="PRO" id="PR:Q5RJN4"/>
<dbReference type="Proteomes" id="UP000002494">
    <property type="component" value="Unplaced"/>
</dbReference>
<dbReference type="GO" id="GO:0005737">
    <property type="term" value="C:cytoplasm"/>
    <property type="evidence" value="ECO:0000250"/>
    <property type="project" value="UniProtKB"/>
</dbReference>
<dbReference type="GO" id="GO:0005634">
    <property type="term" value="C:nucleus"/>
    <property type="evidence" value="ECO:0000250"/>
    <property type="project" value="UniProtKB"/>
</dbReference>
<dbReference type="GO" id="GO:0000932">
    <property type="term" value="C:P-body"/>
    <property type="evidence" value="ECO:0000250"/>
    <property type="project" value="UniProtKB"/>
</dbReference>
<dbReference type="GO" id="GO:0043022">
    <property type="term" value="F:ribosome binding"/>
    <property type="evidence" value="ECO:0000250"/>
    <property type="project" value="UniProtKB"/>
</dbReference>
<dbReference type="GO" id="GO:0003723">
    <property type="term" value="F:RNA binding"/>
    <property type="evidence" value="ECO:0000250"/>
    <property type="project" value="UniProtKB"/>
</dbReference>
<dbReference type="GO" id="GO:1990825">
    <property type="term" value="F:sequence-specific mRNA binding"/>
    <property type="evidence" value="ECO:0000250"/>
    <property type="project" value="UniProtKB"/>
</dbReference>
<dbReference type="GO" id="GO:0051607">
    <property type="term" value="P:defense response to virus"/>
    <property type="evidence" value="ECO:0000250"/>
    <property type="project" value="UniProtKB"/>
</dbReference>
<dbReference type="GO" id="GO:2001125">
    <property type="term" value="P:negative regulation of translational frameshifting"/>
    <property type="evidence" value="ECO:0000250"/>
    <property type="project" value="UniProtKB"/>
</dbReference>
<dbReference type="GO" id="GO:0045071">
    <property type="term" value="P:negative regulation of viral genome replication"/>
    <property type="evidence" value="ECO:0000250"/>
    <property type="project" value="UniProtKB"/>
</dbReference>
<dbReference type="GO" id="GO:0006449">
    <property type="term" value="P:regulation of translational termination"/>
    <property type="evidence" value="ECO:0000250"/>
    <property type="project" value="UniProtKB"/>
</dbReference>
<dbReference type="GO" id="GO:0035456">
    <property type="term" value="P:response to interferon-beta"/>
    <property type="evidence" value="ECO:0000250"/>
    <property type="project" value="UniProtKB"/>
</dbReference>
<dbReference type="GO" id="GO:0034340">
    <property type="term" value="P:response to type I interferon"/>
    <property type="evidence" value="ECO:0000250"/>
    <property type="project" value="UniProtKB"/>
</dbReference>
<dbReference type="GO" id="GO:0034341">
    <property type="term" value="P:response to type II interferon"/>
    <property type="evidence" value="ECO:0000250"/>
    <property type="project" value="UniProtKB"/>
</dbReference>
<dbReference type="GO" id="GO:0034342">
    <property type="term" value="P:response to type III interferon"/>
    <property type="evidence" value="ECO:0000250"/>
    <property type="project" value="UniProtKB"/>
</dbReference>
<dbReference type="GO" id="GO:0075523">
    <property type="term" value="P:viral translational frameshifting"/>
    <property type="evidence" value="ECO:0000250"/>
    <property type="project" value="UniProtKB"/>
</dbReference>
<dbReference type="InterPro" id="IPR026795">
    <property type="entry name" value="SHFL"/>
</dbReference>
<dbReference type="PANTHER" id="PTHR16135">
    <property type="entry name" value="REPRESSOR OF YIELD OF DENV PROTEIN"/>
    <property type="match status" value="1"/>
</dbReference>
<dbReference type="PANTHER" id="PTHR16135:SF2">
    <property type="entry name" value="SHIFTLESS ANTIVIRAL INHIBITOR OF RIBOSOMAL FRAMESHIFTING PROTEIN"/>
    <property type="match status" value="1"/>
</dbReference>
<dbReference type="Pfam" id="PF15135">
    <property type="entry name" value="UPF0515"/>
    <property type="match status" value="1"/>
</dbReference>
<keyword id="KW-0051">Antiviral defense</keyword>
<keyword id="KW-0963">Cytoplasm</keyword>
<keyword id="KW-0539">Nucleus</keyword>
<keyword id="KW-1185">Reference proteome</keyword>
<keyword id="KW-0694">RNA-binding</keyword>
<feature type="chain" id="PRO_0000318703" description="Shiftless antiviral inhibitor of ribosomal frameshifting protein homolog">
    <location>
        <begin position="1"/>
        <end position="163"/>
    </location>
</feature>
<feature type="region of interest" description="Disordered" evidence="2">
    <location>
        <begin position="51"/>
        <end position="75"/>
    </location>
</feature>
<feature type="region of interest" description="Interaction with PABPC1" evidence="1">
    <location>
        <begin position="102"/>
        <end position="150"/>
    </location>
</feature>
<feature type="short sequence motif" description="Nuclear localization signal" evidence="1">
    <location>
        <begin position="121"/>
        <end position="137"/>
    </location>
</feature>
<protein>
    <recommendedName>
        <fullName evidence="3">Shiftless antiviral inhibitor of ribosomal frameshifting protein homolog</fullName>
        <shortName evidence="3">SHFL</shortName>
    </recommendedName>
    <alternativeName>
        <fullName evidence="1">Repressor of yield of DENV protein homolog</fullName>
        <shortName evidence="1">RyDEN</shortName>
    </alternativeName>
</protein>